<name>SYS_ACIC1</name>
<organism>
    <name type="scientific">Acidothermus cellulolyticus (strain ATCC 43068 / DSM 8971 / 11B)</name>
    <dbReference type="NCBI Taxonomy" id="351607"/>
    <lineage>
        <taxon>Bacteria</taxon>
        <taxon>Bacillati</taxon>
        <taxon>Actinomycetota</taxon>
        <taxon>Actinomycetes</taxon>
        <taxon>Acidothermales</taxon>
        <taxon>Acidothermaceae</taxon>
        <taxon>Acidothermus</taxon>
    </lineage>
</organism>
<accession>A0LWR6</accession>
<keyword id="KW-0030">Aminoacyl-tRNA synthetase</keyword>
<keyword id="KW-0067">ATP-binding</keyword>
<keyword id="KW-0963">Cytoplasm</keyword>
<keyword id="KW-0436">Ligase</keyword>
<keyword id="KW-0547">Nucleotide-binding</keyword>
<keyword id="KW-0648">Protein biosynthesis</keyword>
<keyword id="KW-1185">Reference proteome</keyword>
<dbReference type="EC" id="6.1.1.11" evidence="1"/>
<dbReference type="EMBL" id="CP000481">
    <property type="protein sequence ID" value="ABK53876.1"/>
    <property type="molecule type" value="Genomic_DNA"/>
</dbReference>
<dbReference type="RefSeq" id="WP_011720939.1">
    <property type="nucleotide sequence ID" value="NC_008578.1"/>
</dbReference>
<dbReference type="SMR" id="A0LWR6"/>
<dbReference type="FunCoup" id="A0LWR6">
    <property type="interactions" value="357"/>
</dbReference>
<dbReference type="STRING" id="351607.Acel_2104"/>
<dbReference type="KEGG" id="ace:Acel_2104"/>
<dbReference type="eggNOG" id="COG0172">
    <property type="taxonomic scope" value="Bacteria"/>
</dbReference>
<dbReference type="HOGENOM" id="CLU_023797_0_1_11"/>
<dbReference type="InParanoid" id="A0LWR6"/>
<dbReference type="OrthoDB" id="9804647at2"/>
<dbReference type="UniPathway" id="UPA00906">
    <property type="reaction ID" value="UER00895"/>
</dbReference>
<dbReference type="Proteomes" id="UP000008221">
    <property type="component" value="Chromosome"/>
</dbReference>
<dbReference type="GO" id="GO:0005737">
    <property type="term" value="C:cytoplasm"/>
    <property type="evidence" value="ECO:0007669"/>
    <property type="project" value="UniProtKB-SubCell"/>
</dbReference>
<dbReference type="GO" id="GO:0005524">
    <property type="term" value="F:ATP binding"/>
    <property type="evidence" value="ECO:0007669"/>
    <property type="project" value="UniProtKB-UniRule"/>
</dbReference>
<dbReference type="GO" id="GO:0004828">
    <property type="term" value="F:serine-tRNA ligase activity"/>
    <property type="evidence" value="ECO:0007669"/>
    <property type="project" value="UniProtKB-UniRule"/>
</dbReference>
<dbReference type="GO" id="GO:0016260">
    <property type="term" value="P:selenocysteine biosynthetic process"/>
    <property type="evidence" value="ECO:0007669"/>
    <property type="project" value="UniProtKB-UniRule"/>
</dbReference>
<dbReference type="GO" id="GO:0006434">
    <property type="term" value="P:seryl-tRNA aminoacylation"/>
    <property type="evidence" value="ECO:0007669"/>
    <property type="project" value="UniProtKB-UniRule"/>
</dbReference>
<dbReference type="CDD" id="cd00770">
    <property type="entry name" value="SerRS_core"/>
    <property type="match status" value="1"/>
</dbReference>
<dbReference type="FunFam" id="3.30.930.10:FF:000048">
    <property type="entry name" value="Serine--tRNA ligase"/>
    <property type="match status" value="1"/>
</dbReference>
<dbReference type="Gene3D" id="3.30.930.10">
    <property type="entry name" value="Bira Bifunctional Protein, Domain 2"/>
    <property type="match status" value="1"/>
</dbReference>
<dbReference type="Gene3D" id="1.10.287.40">
    <property type="entry name" value="Serine-tRNA synthetase, tRNA binding domain"/>
    <property type="match status" value="1"/>
</dbReference>
<dbReference type="HAMAP" id="MF_00176">
    <property type="entry name" value="Ser_tRNA_synth_type1"/>
    <property type="match status" value="1"/>
</dbReference>
<dbReference type="InterPro" id="IPR002314">
    <property type="entry name" value="aa-tRNA-synt_IIb"/>
</dbReference>
<dbReference type="InterPro" id="IPR006195">
    <property type="entry name" value="aa-tRNA-synth_II"/>
</dbReference>
<dbReference type="InterPro" id="IPR045864">
    <property type="entry name" value="aa-tRNA-synth_II/BPL/LPL"/>
</dbReference>
<dbReference type="InterPro" id="IPR002317">
    <property type="entry name" value="Ser-tRNA-ligase_type_1"/>
</dbReference>
<dbReference type="InterPro" id="IPR015866">
    <property type="entry name" value="Ser-tRNA-synth_1_N"/>
</dbReference>
<dbReference type="InterPro" id="IPR042103">
    <property type="entry name" value="SerRS_1_N_sf"/>
</dbReference>
<dbReference type="InterPro" id="IPR033729">
    <property type="entry name" value="SerRS_core"/>
</dbReference>
<dbReference type="InterPro" id="IPR010978">
    <property type="entry name" value="tRNA-bd_arm"/>
</dbReference>
<dbReference type="NCBIfam" id="TIGR00414">
    <property type="entry name" value="serS"/>
    <property type="match status" value="1"/>
</dbReference>
<dbReference type="PANTHER" id="PTHR11778">
    <property type="entry name" value="SERYL-TRNA SYNTHETASE"/>
    <property type="match status" value="1"/>
</dbReference>
<dbReference type="Pfam" id="PF02403">
    <property type="entry name" value="Seryl_tRNA_N"/>
    <property type="match status" value="1"/>
</dbReference>
<dbReference type="Pfam" id="PF00587">
    <property type="entry name" value="tRNA-synt_2b"/>
    <property type="match status" value="1"/>
</dbReference>
<dbReference type="PIRSF" id="PIRSF001529">
    <property type="entry name" value="Ser-tRNA-synth_IIa"/>
    <property type="match status" value="1"/>
</dbReference>
<dbReference type="PRINTS" id="PR00981">
    <property type="entry name" value="TRNASYNTHSER"/>
</dbReference>
<dbReference type="SUPFAM" id="SSF55681">
    <property type="entry name" value="Class II aaRS and biotin synthetases"/>
    <property type="match status" value="1"/>
</dbReference>
<dbReference type="SUPFAM" id="SSF46589">
    <property type="entry name" value="tRNA-binding arm"/>
    <property type="match status" value="1"/>
</dbReference>
<dbReference type="PROSITE" id="PS50862">
    <property type="entry name" value="AA_TRNA_LIGASE_II"/>
    <property type="match status" value="1"/>
</dbReference>
<feature type="chain" id="PRO_1000019600" description="Serine--tRNA ligase">
    <location>
        <begin position="1"/>
        <end position="420"/>
    </location>
</feature>
<feature type="binding site" evidence="1">
    <location>
        <begin position="227"/>
        <end position="229"/>
    </location>
    <ligand>
        <name>L-serine</name>
        <dbReference type="ChEBI" id="CHEBI:33384"/>
    </ligand>
</feature>
<feature type="binding site" evidence="1">
    <location>
        <begin position="258"/>
        <end position="260"/>
    </location>
    <ligand>
        <name>ATP</name>
        <dbReference type="ChEBI" id="CHEBI:30616"/>
    </ligand>
</feature>
<feature type="binding site" evidence="1">
    <location>
        <position position="274"/>
    </location>
    <ligand>
        <name>ATP</name>
        <dbReference type="ChEBI" id="CHEBI:30616"/>
    </ligand>
</feature>
<feature type="binding site" evidence="1">
    <location>
        <position position="281"/>
    </location>
    <ligand>
        <name>L-serine</name>
        <dbReference type="ChEBI" id="CHEBI:33384"/>
    </ligand>
</feature>
<feature type="binding site" evidence="1">
    <location>
        <begin position="345"/>
        <end position="348"/>
    </location>
    <ligand>
        <name>ATP</name>
        <dbReference type="ChEBI" id="CHEBI:30616"/>
    </ligand>
</feature>
<feature type="binding site" evidence="1">
    <location>
        <position position="379"/>
    </location>
    <ligand>
        <name>L-serine</name>
        <dbReference type="ChEBI" id="CHEBI:33384"/>
    </ligand>
</feature>
<gene>
    <name evidence="1" type="primary">serS</name>
    <name type="ordered locus">Acel_2104</name>
</gene>
<proteinExistence type="inferred from homology"/>
<evidence type="ECO:0000255" key="1">
    <source>
        <dbReference type="HAMAP-Rule" id="MF_00176"/>
    </source>
</evidence>
<sequence length="420" mass="46280">MIDLRLLRDDPERLRASQRARGEDPGLVDAALAADENRRAAVARFEALRAEQKALGRRIASAPPDEKPALLDRAKELAELVKAAEAARDDADAACREALLAISNLVDDEAPRGGEEDFVVLEEIGTPPTFSFPPRDHLELGERLGAIDVERAAKVSGSRFYYLTGVGALLEFALVDLALRQAVTAGFVPVIPPVLVRPPAMEGTGFLGQAAENVFHLEKDDFYLVGTSEVSLAAYHMGEILDAAQLPRRYVGFSTCFRREAGSHGKDTRGIIRVHQFDKVEMFSFTTVGEAAAEHRRLLEWEKQFLTALEIPFRVIDVATGDLGASAARKFDCEAWIPTQGRYREVTSTSNCTEFQARRLDIRMRDEQGIRPLATLNGTLVAIPRTIVAVLENHQQADGSVVVPRALRDYLGTDVLRPKR</sequence>
<comment type="function">
    <text evidence="1">Catalyzes the attachment of serine to tRNA(Ser). Is also able to aminoacylate tRNA(Sec) with serine, to form the misacylated tRNA L-seryl-tRNA(Sec), which will be further converted into selenocysteinyl-tRNA(Sec).</text>
</comment>
<comment type="catalytic activity">
    <reaction evidence="1">
        <text>tRNA(Ser) + L-serine + ATP = L-seryl-tRNA(Ser) + AMP + diphosphate + H(+)</text>
        <dbReference type="Rhea" id="RHEA:12292"/>
        <dbReference type="Rhea" id="RHEA-COMP:9669"/>
        <dbReference type="Rhea" id="RHEA-COMP:9703"/>
        <dbReference type="ChEBI" id="CHEBI:15378"/>
        <dbReference type="ChEBI" id="CHEBI:30616"/>
        <dbReference type="ChEBI" id="CHEBI:33019"/>
        <dbReference type="ChEBI" id="CHEBI:33384"/>
        <dbReference type="ChEBI" id="CHEBI:78442"/>
        <dbReference type="ChEBI" id="CHEBI:78533"/>
        <dbReference type="ChEBI" id="CHEBI:456215"/>
        <dbReference type="EC" id="6.1.1.11"/>
    </reaction>
</comment>
<comment type="catalytic activity">
    <reaction evidence="1">
        <text>tRNA(Sec) + L-serine + ATP = L-seryl-tRNA(Sec) + AMP + diphosphate + H(+)</text>
        <dbReference type="Rhea" id="RHEA:42580"/>
        <dbReference type="Rhea" id="RHEA-COMP:9742"/>
        <dbReference type="Rhea" id="RHEA-COMP:10128"/>
        <dbReference type="ChEBI" id="CHEBI:15378"/>
        <dbReference type="ChEBI" id="CHEBI:30616"/>
        <dbReference type="ChEBI" id="CHEBI:33019"/>
        <dbReference type="ChEBI" id="CHEBI:33384"/>
        <dbReference type="ChEBI" id="CHEBI:78442"/>
        <dbReference type="ChEBI" id="CHEBI:78533"/>
        <dbReference type="ChEBI" id="CHEBI:456215"/>
        <dbReference type="EC" id="6.1.1.11"/>
    </reaction>
</comment>
<comment type="pathway">
    <text evidence="1">Aminoacyl-tRNA biosynthesis; selenocysteinyl-tRNA(Sec) biosynthesis; L-seryl-tRNA(Sec) from L-serine and tRNA(Sec): step 1/1.</text>
</comment>
<comment type="subunit">
    <text evidence="1">Homodimer. The tRNA molecule binds across the dimer.</text>
</comment>
<comment type="subcellular location">
    <subcellularLocation>
        <location evidence="1">Cytoplasm</location>
    </subcellularLocation>
</comment>
<comment type="domain">
    <text evidence="1">Consists of two distinct domains, a catalytic core and a N-terminal extension that is involved in tRNA binding.</text>
</comment>
<comment type="similarity">
    <text evidence="1">Belongs to the class-II aminoacyl-tRNA synthetase family. Type-1 seryl-tRNA synthetase subfamily.</text>
</comment>
<reference key="1">
    <citation type="journal article" date="2009" name="Genome Res.">
        <title>Complete genome of the cellulolytic thermophile Acidothermus cellulolyticus 11B provides insights into its ecophysiological and evolutionary adaptations.</title>
        <authorList>
            <person name="Barabote R.D."/>
            <person name="Xie G."/>
            <person name="Leu D.H."/>
            <person name="Normand P."/>
            <person name="Necsulea A."/>
            <person name="Daubin V."/>
            <person name="Medigue C."/>
            <person name="Adney W.S."/>
            <person name="Xu X.C."/>
            <person name="Lapidus A."/>
            <person name="Parales R.E."/>
            <person name="Detter C."/>
            <person name="Pujic P."/>
            <person name="Bruce D."/>
            <person name="Lavire C."/>
            <person name="Challacombe J.F."/>
            <person name="Brettin T.S."/>
            <person name="Berry A.M."/>
        </authorList>
    </citation>
    <scope>NUCLEOTIDE SEQUENCE [LARGE SCALE GENOMIC DNA]</scope>
    <source>
        <strain>ATCC 43068 / DSM 8971 / 11B</strain>
    </source>
</reference>
<protein>
    <recommendedName>
        <fullName evidence="1">Serine--tRNA ligase</fullName>
        <ecNumber evidence="1">6.1.1.11</ecNumber>
    </recommendedName>
    <alternativeName>
        <fullName evidence="1">Seryl-tRNA synthetase</fullName>
        <shortName evidence="1">SerRS</shortName>
    </alternativeName>
    <alternativeName>
        <fullName evidence="1">Seryl-tRNA(Ser/Sec) synthetase</fullName>
    </alternativeName>
</protein>